<name>YBEY_STRA5</name>
<keyword id="KW-0963">Cytoplasm</keyword>
<keyword id="KW-0255">Endonuclease</keyword>
<keyword id="KW-0378">Hydrolase</keyword>
<keyword id="KW-0479">Metal-binding</keyword>
<keyword id="KW-0540">Nuclease</keyword>
<keyword id="KW-1185">Reference proteome</keyword>
<keyword id="KW-0690">Ribosome biogenesis</keyword>
<keyword id="KW-0698">rRNA processing</keyword>
<keyword id="KW-0862">Zinc</keyword>
<gene>
    <name evidence="1" type="primary">ybeY</name>
    <name type="ordered locus">SAG1501</name>
</gene>
<comment type="function">
    <text evidence="1">Single strand-specific metallo-endoribonuclease involved in late-stage 70S ribosome quality control and in maturation of the 3' terminus of the 16S rRNA.</text>
</comment>
<comment type="cofactor">
    <cofactor evidence="1">
        <name>Zn(2+)</name>
        <dbReference type="ChEBI" id="CHEBI:29105"/>
    </cofactor>
    <text evidence="1">Binds 1 zinc ion.</text>
</comment>
<comment type="subcellular location">
    <subcellularLocation>
        <location evidence="1">Cytoplasm</location>
    </subcellularLocation>
</comment>
<comment type="similarity">
    <text evidence="1">Belongs to the endoribonuclease YbeY family.</text>
</comment>
<comment type="sequence caution" evidence="2">
    <conflict type="erroneous initiation">
        <sequence resource="EMBL-CDS" id="AAN00368"/>
    </conflict>
</comment>
<evidence type="ECO:0000255" key="1">
    <source>
        <dbReference type="HAMAP-Rule" id="MF_00009"/>
    </source>
</evidence>
<evidence type="ECO:0000305" key="2"/>
<sequence>MYVEMIDETGQVSEDIKKQTLDLLEFAAQKTGKENKEMAVTFVTNERSHELNLEYRDTDRPTDVISLEYKPEVDISFDEEDLAENPELAEMLEDFDSYIGELFISIDKAKEQAEEYGHSYEREMGFLAVHGFLHINGYDHYTPEEEKEMFSLQEEILTAYGLKRQ</sequence>
<proteinExistence type="inferred from homology"/>
<reference key="1">
    <citation type="journal article" date="2002" name="Proc. Natl. Acad. Sci. U.S.A.">
        <title>Complete genome sequence and comparative genomic analysis of an emerging human pathogen, serotype V Streptococcus agalactiae.</title>
        <authorList>
            <person name="Tettelin H."/>
            <person name="Masignani V."/>
            <person name="Cieslewicz M.J."/>
            <person name="Eisen J.A."/>
            <person name="Peterson S.N."/>
            <person name="Wessels M.R."/>
            <person name="Paulsen I.T."/>
            <person name="Nelson K.E."/>
            <person name="Margarit I."/>
            <person name="Read T.D."/>
            <person name="Madoff L.C."/>
            <person name="Wolf A.M."/>
            <person name="Beanan M.J."/>
            <person name="Brinkac L.M."/>
            <person name="Daugherty S.C."/>
            <person name="DeBoy R.T."/>
            <person name="Durkin A.S."/>
            <person name="Kolonay J.F."/>
            <person name="Madupu R."/>
            <person name="Lewis M.R."/>
            <person name="Radune D."/>
            <person name="Fedorova N.B."/>
            <person name="Scanlan D."/>
            <person name="Khouri H.M."/>
            <person name="Mulligan S."/>
            <person name="Carty H.A."/>
            <person name="Cline R.T."/>
            <person name="Van Aken S.E."/>
            <person name="Gill J."/>
            <person name="Scarselli M."/>
            <person name="Mora M."/>
            <person name="Iacobini E.T."/>
            <person name="Brettoni C."/>
            <person name="Galli G."/>
            <person name="Mariani M."/>
            <person name="Vegni F."/>
            <person name="Maione D."/>
            <person name="Rinaudo D."/>
            <person name="Rappuoli R."/>
            <person name="Telford J.L."/>
            <person name="Kasper D.L."/>
            <person name="Grandi G."/>
            <person name="Fraser C.M."/>
        </authorList>
    </citation>
    <scope>NUCLEOTIDE SEQUENCE [LARGE SCALE GENOMIC DNA]</scope>
    <source>
        <strain>ATCC BAA-611 / 2603 V/R</strain>
    </source>
</reference>
<accession>P67139</accession>
<accession>Q8DYH9</accession>
<accession>Q8E441</accession>
<feature type="chain" id="PRO_0000102536" description="Endoribonuclease YbeY">
    <location>
        <begin position="1"/>
        <end position="165"/>
    </location>
</feature>
<feature type="binding site" evidence="1">
    <location>
        <position position="130"/>
    </location>
    <ligand>
        <name>Zn(2+)</name>
        <dbReference type="ChEBI" id="CHEBI:29105"/>
        <note>catalytic</note>
    </ligand>
</feature>
<feature type="binding site" evidence="1">
    <location>
        <position position="134"/>
    </location>
    <ligand>
        <name>Zn(2+)</name>
        <dbReference type="ChEBI" id="CHEBI:29105"/>
        <note>catalytic</note>
    </ligand>
</feature>
<feature type="binding site" evidence="1">
    <location>
        <position position="140"/>
    </location>
    <ligand>
        <name>Zn(2+)</name>
        <dbReference type="ChEBI" id="CHEBI:29105"/>
        <note>catalytic</note>
    </ligand>
</feature>
<protein>
    <recommendedName>
        <fullName evidence="1">Endoribonuclease YbeY</fullName>
        <ecNumber evidence="1">3.1.-.-</ecNumber>
    </recommendedName>
</protein>
<dbReference type="EC" id="3.1.-.-" evidence="1"/>
<dbReference type="EMBL" id="AE009948">
    <property type="protein sequence ID" value="AAN00368.1"/>
    <property type="status" value="ALT_INIT"/>
    <property type="molecule type" value="Genomic_DNA"/>
</dbReference>
<dbReference type="RefSeq" id="NP_688495.1">
    <property type="nucleotide sequence ID" value="NC_004116.1"/>
</dbReference>
<dbReference type="RefSeq" id="WP_001867191.1">
    <property type="nucleotide sequence ID" value="NC_004116.1"/>
</dbReference>
<dbReference type="SMR" id="P67139"/>
<dbReference type="STRING" id="208435.SAG1501"/>
<dbReference type="KEGG" id="sag:SAG1501"/>
<dbReference type="PATRIC" id="fig|208435.3.peg.1511"/>
<dbReference type="HOGENOM" id="CLU_106710_3_0_9"/>
<dbReference type="OrthoDB" id="9807740at2"/>
<dbReference type="Proteomes" id="UP000000821">
    <property type="component" value="Chromosome"/>
</dbReference>
<dbReference type="GO" id="GO:0005737">
    <property type="term" value="C:cytoplasm"/>
    <property type="evidence" value="ECO:0007669"/>
    <property type="project" value="UniProtKB-SubCell"/>
</dbReference>
<dbReference type="GO" id="GO:0004222">
    <property type="term" value="F:metalloendopeptidase activity"/>
    <property type="evidence" value="ECO:0007669"/>
    <property type="project" value="InterPro"/>
</dbReference>
<dbReference type="GO" id="GO:0004521">
    <property type="term" value="F:RNA endonuclease activity"/>
    <property type="evidence" value="ECO:0007669"/>
    <property type="project" value="UniProtKB-UniRule"/>
</dbReference>
<dbReference type="GO" id="GO:0008270">
    <property type="term" value="F:zinc ion binding"/>
    <property type="evidence" value="ECO:0007669"/>
    <property type="project" value="UniProtKB-UniRule"/>
</dbReference>
<dbReference type="GO" id="GO:0006364">
    <property type="term" value="P:rRNA processing"/>
    <property type="evidence" value="ECO:0007669"/>
    <property type="project" value="UniProtKB-UniRule"/>
</dbReference>
<dbReference type="Gene3D" id="3.40.390.30">
    <property type="entry name" value="Metalloproteases ('zincins'), catalytic domain"/>
    <property type="match status" value="1"/>
</dbReference>
<dbReference type="HAMAP" id="MF_00009">
    <property type="entry name" value="Endoribonucl_YbeY"/>
    <property type="match status" value="1"/>
</dbReference>
<dbReference type="InterPro" id="IPR023091">
    <property type="entry name" value="MetalPrtase_cat_dom_sf_prd"/>
</dbReference>
<dbReference type="InterPro" id="IPR002036">
    <property type="entry name" value="YbeY"/>
</dbReference>
<dbReference type="InterPro" id="IPR020549">
    <property type="entry name" value="YbeY_CS"/>
</dbReference>
<dbReference type="NCBIfam" id="TIGR00043">
    <property type="entry name" value="rRNA maturation RNase YbeY"/>
    <property type="match status" value="1"/>
</dbReference>
<dbReference type="PANTHER" id="PTHR46986">
    <property type="entry name" value="ENDORIBONUCLEASE YBEY, CHLOROPLASTIC"/>
    <property type="match status" value="1"/>
</dbReference>
<dbReference type="PANTHER" id="PTHR46986:SF1">
    <property type="entry name" value="ENDORIBONUCLEASE YBEY, CHLOROPLASTIC"/>
    <property type="match status" value="1"/>
</dbReference>
<dbReference type="Pfam" id="PF02130">
    <property type="entry name" value="YbeY"/>
    <property type="match status" value="1"/>
</dbReference>
<dbReference type="SUPFAM" id="SSF55486">
    <property type="entry name" value="Metalloproteases ('zincins'), catalytic domain"/>
    <property type="match status" value="1"/>
</dbReference>
<dbReference type="PROSITE" id="PS01306">
    <property type="entry name" value="UPF0054"/>
    <property type="match status" value="1"/>
</dbReference>
<organism>
    <name type="scientific">Streptococcus agalactiae serotype V (strain ATCC BAA-611 / 2603 V/R)</name>
    <dbReference type="NCBI Taxonomy" id="208435"/>
    <lineage>
        <taxon>Bacteria</taxon>
        <taxon>Bacillati</taxon>
        <taxon>Bacillota</taxon>
        <taxon>Bacilli</taxon>
        <taxon>Lactobacillales</taxon>
        <taxon>Streptococcaceae</taxon>
        <taxon>Streptococcus</taxon>
    </lineage>
</organism>